<keyword id="KW-0004">4Fe-4S</keyword>
<keyword id="KW-0408">Iron</keyword>
<keyword id="KW-0411">Iron-sulfur</keyword>
<keyword id="KW-0414">Isoprene biosynthesis</keyword>
<keyword id="KW-0479">Metal-binding</keyword>
<keyword id="KW-0560">Oxidoreductase</keyword>
<proteinExistence type="inferred from homology"/>
<comment type="function">
    <text evidence="1">Catalyzes the conversion of 1-hydroxy-2-methyl-2-(E)-butenyl 4-diphosphate (HMBPP) into a mixture of isopentenyl diphosphate (IPP) and dimethylallyl diphosphate (DMAPP). Acts in the terminal step of the DOXP/MEP pathway for isoprenoid precursor biosynthesis.</text>
</comment>
<comment type="catalytic activity">
    <reaction evidence="1">
        <text>isopentenyl diphosphate + 2 oxidized [2Fe-2S]-[ferredoxin] + H2O = (2E)-4-hydroxy-3-methylbut-2-enyl diphosphate + 2 reduced [2Fe-2S]-[ferredoxin] + 2 H(+)</text>
        <dbReference type="Rhea" id="RHEA:24488"/>
        <dbReference type="Rhea" id="RHEA-COMP:10000"/>
        <dbReference type="Rhea" id="RHEA-COMP:10001"/>
        <dbReference type="ChEBI" id="CHEBI:15377"/>
        <dbReference type="ChEBI" id="CHEBI:15378"/>
        <dbReference type="ChEBI" id="CHEBI:33737"/>
        <dbReference type="ChEBI" id="CHEBI:33738"/>
        <dbReference type="ChEBI" id="CHEBI:128753"/>
        <dbReference type="ChEBI" id="CHEBI:128769"/>
        <dbReference type="EC" id="1.17.7.4"/>
    </reaction>
</comment>
<comment type="catalytic activity">
    <reaction evidence="1">
        <text>dimethylallyl diphosphate + 2 oxidized [2Fe-2S]-[ferredoxin] + H2O = (2E)-4-hydroxy-3-methylbut-2-enyl diphosphate + 2 reduced [2Fe-2S]-[ferredoxin] + 2 H(+)</text>
        <dbReference type="Rhea" id="RHEA:24825"/>
        <dbReference type="Rhea" id="RHEA-COMP:10000"/>
        <dbReference type="Rhea" id="RHEA-COMP:10001"/>
        <dbReference type="ChEBI" id="CHEBI:15377"/>
        <dbReference type="ChEBI" id="CHEBI:15378"/>
        <dbReference type="ChEBI" id="CHEBI:33737"/>
        <dbReference type="ChEBI" id="CHEBI:33738"/>
        <dbReference type="ChEBI" id="CHEBI:57623"/>
        <dbReference type="ChEBI" id="CHEBI:128753"/>
        <dbReference type="EC" id="1.17.7.4"/>
    </reaction>
</comment>
<comment type="cofactor">
    <cofactor evidence="1">
        <name>[4Fe-4S] cluster</name>
        <dbReference type="ChEBI" id="CHEBI:49883"/>
    </cofactor>
    <text evidence="1">Binds 1 [4Fe-4S] cluster per subunit.</text>
</comment>
<comment type="pathway">
    <text evidence="1">Isoprenoid biosynthesis; dimethylallyl diphosphate biosynthesis; dimethylallyl diphosphate from (2E)-4-hydroxy-3-methylbutenyl diphosphate: step 1/1.</text>
</comment>
<comment type="pathway">
    <text evidence="1">Isoprenoid biosynthesis; isopentenyl diphosphate biosynthesis via DXP pathway; isopentenyl diphosphate from 1-deoxy-D-xylulose 5-phosphate: step 6/6.</text>
</comment>
<comment type="similarity">
    <text evidence="1">Belongs to the IspH family.</text>
</comment>
<gene>
    <name evidence="1" type="primary">ispH</name>
    <name type="ordered locus">xcc-b100_3181</name>
</gene>
<dbReference type="EC" id="1.17.7.4" evidence="1"/>
<dbReference type="EMBL" id="AM920689">
    <property type="protein sequence ID" value="CAP52546.1"/>
    <property type="molecule type" value="Genomic_DNA"/>
</dbReference>
<dbReference type="SMR" id="B0RY26"/>
<dbReference type="KEGG" id="xca:xcc-b100_3181"/>
<dbReference type="HOGENOM" id="CLU_027486_1_0_6"/>
<dbReference type="UniPathway" id="UPA00056">
    <property type="reaction ID" value="UER00097"/>
</dbReference>
<dbReference type="UniPathway" id="UPA00059">
    <property type="reaction ID" value="UER00105"/>
</dbReference>
<dbReference type="Proteomes" id="UP000001188">
    <property type="component" value="Chromosome"/>
</dbReference>
<dbReference type="GO" id="GO:0051539">
    <property type="term" value="F:4 iron, 4 sulfur cluster binding"/>
    <property type="evidence" value="ECO:0007669"/>
    <property type="project" value="UniProtKB-UniRule"/>
</dbReference>
<dbReference type="GO" id="GO:0051745">
    <property type="term" value="F:4-hydroxy-3-methylbut-2-enyl diphosphate reductase activity"/>
    <property type="evidence" value="ECO:0007669"/>
    <property type="project" value="UniProtKB-UniRule"/>
</dbReference>
<dbReference type="GO" id="GO:0046872">
    <property type="term" value="F:metal ion binding"/>
    <property type="evidence" value="ECO:0007669"/>
    <property type="project" value="UniProtKB-KW"/>
</dbReference>
<dbReference type="GO" id="GO:0050992">
    <property type="term" value="P:dimethylallyl diphosphate biosynthetic process"/>
    <property type="evidence" value="ECO:0007669"/>
    <property type="project" value="UniProtKB-UniRule"/>
</dbReference>
<dbReference type="GO" id="GO:0019288">
    <property type="term" value="P:isopentenyl diphosphate biosynthetic process, methylerythritol 4-phosphate pathway"/>
    <property type="evidence" value="ECO:0007669"/>
    <property type="project" value="UniProtKB-UniRule"/>
</dbReference>
<dbReference type="GO" id="GO:0016114">
    <property type="term" value="P:terpenoid biosynthetic process"/>
    <property type="evidence" value="ECO:0007669"/>
    <property type="project" value="UniProtKB-UniRule"/>
</dbReference>
<dbReference type="CDD" id="cd13944">
    <property type="entry name" value="lytB_ispH"/>
    <property type="match status" value="1"/>
</dbReference>
<dbReference type="Gene3D" id="3.40.50.11270">
    <property type="match status" value="1"/>
</dbReference>
<dbReference type="Gene3D" id="3.40.1010.20">
    <property type="entry name" value="4-hydroxy-3-methylbut-2-enyl diphosphate reductase, catalytic domain"/>
    <property type="match status" value="2"/>
</dbReference>
<dbReference type="HAMAP" id="MF_00191">
    <property type="entry name" value="IspH"/>
    <property type="match status" value="1"/>
</dbReference>
<dbReference type="InterPro" id="IPR003451">
    <property type="entry name" value="LytB/IspH"/>
</dbReference>
<dbReference type="NCBIfam" id="TIGR00216">
    <property type="entry name" value="ispH_lytB"/>
    <property type="match status" value="1"/>
</dbReference>
<dbReference type="NCBIfam" id="NF002188">
    <property type="entry name" value="PRK01045.1-2"/>
    <property type="match status" value="1"/>
</dbReference>
<dbReference type="NCBIfam" id="NF002190">
    <property type="entry name" value="PRK01045.1-4"/>
    <property type="match status" value="1"/>
</dbReference>
<dbReference type="PANTHER" id="PTHR30426">
    <property type="entry name" value="4-HYDROXY-3-METHYLBUT-2-ENYL DIPHOSPHATE REDUCTASE"/>
    <property type="match status" value="1"/>
</dbReference>
<dbReference type="PANTHER" id="PTHR30426:SF0">
    <property type="entry name" value="4-HYDROXY-3-METHYLBUT-2-ENYL DIPHOSPHATE REDUCTASE"/>
    <property type="match status" value="1"/>
</dbReference>
<dbReference type="Pfam" id="PF02401">
    <property type="entry name" value="LYTB"/>
    <property type="match status" value="1"/>
</dbReference>
<protein>
    <recommendedName>
        <fullName evidence="1">4-hydroxy-3-methylbut-2-enyl diphosphate reductase</fullName>
        <shortName evidence="1">HMBPP reductase</shortName>
        <ecNumber evidence="1">1.17.7.4</ecNumber>
    </recommendedName>
</protein>
<reference key="1">
    <citation type="journal article" date="2008" name="J. Biotechnol.">
        <title>The genome of Xanthomonas campestris pv. campestris B100 and its use for the reconstruction of metabolic pathways involved in xanthan biosynthesis.</title>
        <authorList>
            <person name="Vorhoelter F.-J."/>
            <person name="Schneiker S."/>
            <person name="Goesmann A."/>
            <person name="Krause L."/>
            <person name="Bekel T."/>
            <person name="Kaiser O."/>
            <person name="Linke B."/>
            <person name="Patschkowski T."/>
            <person name="Rueckert C."/>
            <person name="Schmid J."/>
            <person name="Sidhu V.K."/>
            <person name="Sieber V."/>
            <person name="Tauch A."/>
            <person name="Watt S.A."/>
            <person name="Weisshaar B."/>
            <person name="Becker A."/>
            <person name="Niehaus K."/>
            <person name="Puehler A."/>
        </authorList>
    </citation>
    <scope>NUCLEOTIDE SEQUENCE [LARGE SCALE GENOMIC DNA]</scope>
    <source>
        <strain>B100</strain>
    </source>
</reference>
<name>ISPH_XANCB</name>
<accession>B0RY26</accession>
<sequence length="316" mass="34668">MDVLLANPRGFCAGVDRAIEIVKRAIETLGAPIYVRHEVVHNRFVVDDLKQRGAIFVEELDEVPDDATVIFSAHGVSQAVRVEAERRGLKVFDATCPLVTKVHFEVARHCRAGRDVVLIGHAGHPEVEGTMGQWSRERGPGQIYLVEDIEQVATLQVRQPENLAYTTQTTLSVDDTMGIIEALRVRYPAMQGPKHDDICYATQNRQDAVRDLARQCDLVLVVGSPNSSNSNRLSELARRDGVESYLIDNASEIDPAWIVGKQHIGLTAGASAPQVLVDGVLARLRELGANGVSELAGEPESMVFALPKELRLRLVS</sequence>
<feature type="chain" id="PRO_1000098989" description="4-hydroxy-3-methylbut-2-enyl diphosphate reductase">
    <location>
        <begin position="1"/>
        <end position="316"/>
    </location>
</feature>
<feature type="active site" description="Proton donor" evidence="1">
    <location>
        <position position="126"/>
    </location>
</feature>
<feature type="binding site" evidence="1">
    <location>
        <position position="12"/>
    </location>
    <ligand>
        <name>[4Fe-4S] cluster</name>
        <dbReference type="ChEBI" id="CHEBI:49883"/>
    </ligand>
</feature>
<feature type="binding site" evidence="1">
    <location>
        <position position="41"/>
    </location>
    <ligand>
        <name>(2E)-4-hydroxy-3-methylbut-2-enyl diphosphate</name>
        <dbReference type="ChEBI" id="CHEBI:128753"/>
    </ligand>
</feature>
<feature type="binding site" evidence="1">
    <location>
        <position position="41"/>
    </location>
    <ligand>
        <name>dimethylallyl diphosphate</name>
        <dbReference type="ChEBI" id="CHEBI:57623"/>
    </ligand>
</feature>
<feature type="binding site" evidence="1">
    <location>
        <position position="41"/>
    </location>
    <ligand>
        <name>isopentenyl diphosphate</name>
        <dbReference type="ChEBI" id="CHEBI:128769"/>
    </ligand>
</feature>
<feature type="binding site" evidence="1">
    <location>
        <position position="74"/>
    </location>
    <ligand>
        <name>(2E)-4-hydroxy-3-methylbut-2-enyl diphosphate</name>
        <dbReference type="ChEBI" id="CHEBI:128753"/>
    </ligand>
</feature>
<feature type="binding site" evidence="1">
    <location>
        <position position="74"/>
    </location>
    <ligand>
        <name>dimethylallyl diphosphate</name>
        <dbReference type="ChEBI" id="CHEBI:57623"/>
    </ligand>
</feature>
<feature type="binding site" evidence="1">
    <location>
        <position position="74"/>
    </location>
    <ligand>
        <name>isopentenyl diphosphate</name>
        <dbReference type="ChEBI" id="CHEBI:128769"/>
    </ligand>
</feature>
<feature type="binding site" evidence="1">
    <location>
        <position position="96"/>
    </location>
    <ligand>
        <name>[4Fe-4S] cluster</name>
        <dbReference type="ChEBI" id="CHEBI:49883"/>
    </ligand>
</feature>
<feature type="binding site" evidence="1">
    <location>
        <position position="124"/>
    </location>
    <ligand>
        <name>(2E)-4-hydroxy-3-methylbut-2-enyl diphosphate</name>
        <dbReference type="ChEBI" id="CHEBI:128753"/>
    </ligand>
</feature>
<feature type="binding site" evidence="1">
    <location>
        <position position="124"/>
    </location>
    <ligand>
        <name>dimethylallyl diphosphate</name>
        <dbReference type="ChEBI" id="CHEBI:57623"/>
    </ligand>
</feature>
<feature type="binding site" evidence="1">
    <location>
        <position position="124"/>
    </location>
    <ligand>
        <name>isopentenyl diphosphate</name>
        <dbReference type="ChEBI" id="CHEBI:128769"/>
    </ligand>
</feature>
<feature type="binding site" evidence="1">
    <location>
        <position position="169"/>
    </location>
    <ligand>
        <name>(2E)-4-hydroxy-3-methylbut-2-enyl diphosphate</name>
        <dbReference type="ChEBI" id="CHEBI:128753"/>
    </ligand>
</feature>
<feature type="binding site" evidence="1">
    <location>
        <position position="199"/>
    </location>
    <ligand>
        <name>[4Fe-4S] cluster</name>
        <dbReference type="ChEBI" id="CHEBI:49883"/>
    </ligand>
</feature>
<feature type="binding site" evidence="1">
    <location>
        <position position="227"/>
    </location>
    <ligand>
        <name>(2E)-4-hydroxy-3-methylbut-2-enyl diphosphate</name>
        <dbReference type="ChEBI" id="CHEBI:128753"/>
    </ligand>
</feature>
<feature type="binding site" evidence="1">
    <location>
        <position position="227"/>
    </location>
    <ligand>
        <name>dimethylallyl diphosphate</name>
        <dbReference type="ChEBI" id="CHEBI:57623"/>
    </ligand>
</feature>
<feature type="binding site" evidence="1">
    <location>
        <position position="227"/>
    </location>
    <ligand>
        <name>isopentenyl diphosphate</name>
        <dbReference type="ChEBI" id="CHEBI:128769"/>
    </ligand>
</feature>
<feature type="binding site" evidence="1">
    <location>
        <position position="228"/>
    </location>
    <ligand>
        <name>(2E)-4-hydroxy-3-methylbut-2-enyl diphosphate</name>
        <dbReference type="ChEBI" id="CHEBI:128753"/>
    </ligand>
</feature>
<feature type="binding site" evidence="1">
    <location>
        <position position="228"/>
    </location>
    <ligand>
        <name>dimethylallyl diphosphate</name>
        <dbReference type="ChEBI" id="CHEBI:57623"/>
    </ligand>
</feature>
<feature type="binding site" evidence="1">
    <location>
        <position position="228"/>
    </location>
    <ligand>
        <name>isopentenyl diphosphate</name>
        <dbReference type="ChEBI" id="CHEBI:128769"/>
    </ligand>
</feature>
<feature type="binding site" evidence="1">
    <location>
        <position position="229"/>
    </location>
    <ligand>
        <name>(2E)-4-hydroxy-3-methylbut-2-enyl diphosphate</name>
        <dbReference type="ChEBI" id="CHEBI:128753"/>
    </ligand>
</feature>
<feature type="binding site" evidence="1">
    <location>
        <position position="229"/>
    </location>
    <ligand>
        <name>dimethylallyl diphosphate</name>
        <dbReference type="ChEBI" id="CHEBI:57623"/>
    </ligand>
</feature>
<feature type="binding site" evidence="1">
    <location>
        <position position="229"/>
    </location>
    <ligand>
        <name>isopentenyl diphosphate</name>
        <dbReference type="ChEBI" id="CHEBI:128769"/>
    </ligand>
</feature>
<feature type="binding site" evidence="1">
    <location>
        <position position="271"/>
    </location>
    <ligand>
        <name>(2E)-4-hydroxy-3-methylbut-2-enyl diphosphate</name>
        <dbReference type="ChEBI" id="CHEBI:128753"/>
    </ligand>
</feature>
<feature type="binding site" evidence="1">
    <location>
        <position position="271"/>
    </location>
    <ligand>
        <name>dimethylallyl diphosphate</name>
        <dbReference type="ChEBI" id="CHEBI:57623"/>
    </ligand>
</feature>
<feature type="binding site" evidence="1">
    <location>
        <position position="271"/>
    </location>
    <ligand>
        <name>isopentenyl diphosphate</name>
        <dbReference type="ChEBI" id="CHEBI:128769"/>
    </ligand>
</feature>
<evidence type="ECO:0000255" key="1">
    <source>
        <dbReference type="HAMAP-Rule" id="MF_00191"/>
    </source>
</evidence>
<organism>
    <name type="scientific">Xanthomonas campestris pv. campestris (strain B100)</name>
    <dbReference type="NCBI Taxonomy" id="509169"/>
    <lineage>
        <taxon>Bacteria</taxon>
        <taxon>Pseudomonadati</taxon>
        <taxon>Pseudomonadota</taxon>
        <taxon>Gammaproteobacteria</taxon>
        <taxon>Lysobacterales</taxon>
        <taxon>Lysobacteraceae</taxon>
        <taxon>Xanthomonas</taxon>
    </lineage>
</organism>